<name>PRR14_BOVIN</name>
<evidence type="ECO:0000250" key="1">
    <source>
        <dbReference type="UniProtKB" id="Q9BWN1"/>
    </source>
</evidence>
<evidence type="ECO:0000256" key="2">
    <source>
        <dbReference type="SAM" id="MobiDB-lite"/>
    </source>
</evidence>
<evidence type="ECO:0000305" key="3"/>
<gene>
    <name type="primary">PRR14</name>
</gene>
<reference key="1">
    <citation type="journal article" date="2005" name="BMC Genomics">
        <title>Characterization of 954 bovine full-CDS cDNA sequences.</title>
        <authorList>
            <person name="Harhay G.P."/>
            <person name="Sonstegard T.S."/>
            <person name="Keele J.W."/>
            <person name="Heaton M.P."/>
            <person name="Clawson M.L."/>
            <person name="Snelling W.M."/>
            <person name="Wiedmann R.T."/>
            <person name="Van Tassell C.P."/>
            <person name="Smith T.P.L."/>
        </authorList>
    </citation>
    <scope>NUCLEOTIDE SEQUENCE [LARGE SCALE MRNA]</scope>
</reference>
<reference key="2">
    <citation type="submission" date="2006-08" db="EMBL/GenBank/DDBJ databases">
        <authorList>
            <consortium name="NIH - Mammalian Gene Collection (MGC) project"/>
        </authorList>
    </citation>
    <scope>NUCLEOTIDE SEQUENCE [LARGE SCALE MRNA]</scope>
    <source>
        <strain>Hereford</strain>
        <tissue>Fetal skin</tissue>
    </source>
</reference>
<accession>Q0VBZ8</accession>
<accession>Q58D02</accession>
<dbReference type="EMBL" id="BT021795">
    <property type="protein sequence ID" value="AAX46642.1"/>
    <property type="molecule type" value="mRNA"/>
</dbReference>
<dbReference type="EMBL" id="BC120423">
    <property type="protein sequence ID" value="AAI20424.1"/>
    <property type="molecule type" value="mRNA"/>
</dbReference>
<dbReference type="RefSeq" id="NP_001030473.1">
    <property type="nucleotide sequence ID" value="NM_001035396.1"/>
</dbReference>
<dbReference type="RefSeq" id="XP_005224977.2">
    <property type="nucleotide sequence ID" value="XM_005224920.5"/>
</dbReference>
<dbReference type="RefSeq" id="XP_024840752.1">
    <property type="nucleotide sequence ID" value="XM_024984984.2"/>
</dbReference>
<dbReference type="RefSeq" id="XP_059737362.1">
    <property type="nucleotide sequence ID" value="XM_059881379.1"/>
</dbReference>
<dbReference type="FunCoup" id="Q0VBZ8">
    <property type="interactions" value="1579"/>
</dbReference>
<dbReference type="STRING" id="9913.ENSBTAP00000011995"/>
<dbReference type="PaxDb" id="9913-ENSBTAP00000011995"/>
<dbReference type="GeneID" id="533235"/>
<dbReference type="KEGG" id="bta:533235"/>
<dbReference type="CTD" id="78994"/>
<dbReference type="VEuPathDB" id="HostDB:ENSBTAG00000009099"/>
<dbReference type="eggNOG" id="ENOG502RJ6E">
    <property type="taxonomic scope" value="Eukaryota"/>
</dbReference>
<dbReference type="HOGENOM" id="CLU_489653_0_0_1"/>
<dbReference type="InParanoid" id="Q0VBZ8"/>
<dbReference type="OrthoDB" id="6163216at2759"/>
<dbReference type="TreeFam" id="TF328446"/>
<dbReference type="Proteomes" id="UP000009136">
    <property type="component" value="Chromosome 25"/>
</dbReference>
<dbReference type="Bgee" id="ENSBTAG00000009099">
    <property type="expression patterns" value="Expressed in oocyte and 104 other cell types or tissues"/>
</dbReference>
<dbReference type="GO" id="GO:0005694">
    <property type="term" value="C:chromosome"/>
    <property type="evidence" value="ECO:0007669"/>
    <property type="project" value="UniProtKB-SubCell"/>
</dbReference>
<dbReference type="GO" id="GO:0005652">
    <property type="term" value="C:nuclear lamina"/>
    <property type="evidence" value="ECO:0007669"/>
    <property type="project" value="UniProtKB-SubCell"/>
</dbReference>
<dbReference type="GO" id="GO:0005654">
    <property type="term" value="C:nucleoplasm"/>
    <property type="evidence" value="ECO:0000318"/>
    <property type="project" value="GO_Central"/>
</dbReference>
<dbReference type="GO" id="GO:0007517">
    <property type="term" value="P:muscle organ development"/>
    <property type="evidence" value="ECO:0007669"/>
    <property type="project" value="UniProtKB-KW"/>
</dbReference>
<dbReference type="InterPro" id="IPR026320">
    <property type="entry name" value="PRR14"/>
</dbReference>
<dbReference type="InterPro" id="IPR028149">
    <property type="entry name" value="Tantalus-like"/>
</dbReference>
<dbReference type="PANTHER" id="PTHR14522">
    <property type="entry name" value="EMO2-RELATED"/>
    <property type="match status" value="1"/>
</dbReference>
<dbReference type="PANTHER" id="PTHR14522:SF2">
    <property type="entry name" value="PROLINE-RICH PROTEIN 14"/>
    <property type="match status" value="1"/>
</dbReference>
<dbReference type="Pfam" id="PF15386">
    <property type="entry name" value="Tantalus"/>
    <property type="match status" value="1"/>
</dbReference>
<proteinExistence type="evidence at transcript level"/>
<sequence>MDLPGDSSTPGRQRLCRQPHAGALWGAKSPKRPKLQPLGAPSPLEKASRRVLAVVLEDVMAARMVPLEPQEESSTPRHHSNHRDSVRSQPPASPPRQAMWSPQARPPDPLHLCREPLSRIRRPPSTPRRQSRTTPGPDEGPSQKVDQVHQPTLVVMLQDIASSRPRAEGFADEAPNFIIPARRAEPKVMVHQPKPPSRDLPAPSRPSALSANPLASPPPAPDPVLEPPSTPPPSSLLRPRLSPWGLAPLFHSVRSKLESFADIFLTPNKAPRPPPPSPPMKLELKIAISEAGQPGASEGTVTVSPRPPIRQWRAQDQNPSATLTKPSLGRSHSCPDLGPPGPDPCSWPPVPAPSSRPRPRRHTVGGGEMAKAPPPPRPCLRKEVFPLGGVGASPPLVTSCSSTASTSSFSEPAEPRLSSTKRKEPRAPEDQVLPDSETKTIGKVSRFRIRRTPARSQINLTPMGLPRPVRLNKKEFSLEEIYTNKNYQSPTTRRTFETIFEEPRERNGTLIFTSSRKLRRTVEFRDSSLPRSRRPSRGARATAGRTLPPSLAPSPDVEPLLQQRLQELDASLLEEEEEGDQDQPHRT</sequence>
<keyword id="KW-0007">Acetylation</keyword>
<keyword id="KW-0158">Chromosome</keyword>
<keyword id="KW-0517">Myogenesis</keyword>
<keyword id="KW-0539">Nucleus</keyword>
<keyword id="KW-0597">Phosphoprotein</keyword>
<keyword id="KW-1185">Reference proteome</keyword>
<organism>
    <name type="scientific">Bos taurus</name>
    <name type="common">Bovine</name>
    <dbReference type="NCBI Taxonomy" id="9913"/>
    <lineage>
        <taxon>Eukaryota</taxon>
        <taxon>Metazoa</taxon>
        <taxon>Chordata</taxon>
        <taxon>Craniata</taxon>
        <taxon>Vertebrata</taxon>
        <taxon>Euteleostomi</taxon>
        <taxon>Mammalia</taxon>
        <taxon>Eutheria</taxon>
        <taxon>Laurasiatheria</taxon>
        <taxon>Artiodactyla</taxon>
        <taxon>Ruminantia</taxon>
        <taxon>Pecora</taxon>
        <taxon>Bovidae</taxon>
        <taxon>Bovinae</taxon>
        <taxon>Bos</taxon>
    </lineage>
</organism>
<protein>
    <recommendedName>
        <fullName>Proline-rich protein 14</fullName>
    </recommendedName>
</protein>
<comment type="function">
    <text evidence="1">Functions in tethering peripheral heterochromatin to the nuclear lamina during interphase, possibly through the interaction with heterochromatin protein CBX5/HP1 alpha. Might play a role in reattaching heterochromatin to the nuclear lamina at mitotic exit. Promotes myoblast differentiation during skeletal myogenesis, possibly by stimulating transcription factor MyoD activity via binding to CBX5/HP1 alpha. Involved in the positive regulation of the PI3K-Akt-mTOR signaling pathway and in promoting cell proliferation, possibly via binding to GRB2 (By similarity).</text>
</comment>
<comment type="subunit">
    <text evidence="1">Interacts (via proline-rich region) with GRB2 (via SH3 domain 2). Interacts (via N-terminus) with CBX5.</text>
</comment>
<comment type="subcellular location">
    <subcellularLocation>
        <location evidence="1">Chromosome</location>
    </subcellularLocation>
    <subcellularLocation>
        <location evidence="1">Nucleus</location>
    </subcellularLocation>
    <subcellularLocation>
        <location evidence="1">Nucleus lamina</location>
    </subcellularLocation>
    <subcellularLocation>
        <location evidence="1">Nucleus</location>
        <location evidence="1">Nucleoplasm</location>
    </subcellularLocation>
    <text evidence="1">During interphase, associated with peripheral heterochromatin at the nuclear lamina. Released from the nuclear lamina in mitotic prophase and remains highly dispersed in metaphase. Associates with chromatin at the onset of anaphase and relocalizes to the nuclear lamina in telophase.</text>
</comment>
<feature type="chain" id="PRO_0000307268" description="Proline-rich protein 14">
    <location>
        <begin position="1"/>
        <end position="587"/>
    </location>
</feature>
<feature type="region of interest" description="Sufficient for heterochromatin association in interphase and chromatin association in anaphase" evidence="1">
    <location>
        <begin position="1"/>
        <end position="135"/>
    </location>
</feature>
<feature type="region of interest" description="Disordered" evidence="2">
    <location>
        <begin position="1"/>
        <end position="48"/>
    </location>
</feature>
<feature type="region of interest" description="Disordered" evidence="2">
    <location>
        <begin position="65"/>
        <end position="152"/>
    </location>
</feature>
<feature type="region of interest" description="Required for the interaction with GRB2 and sufficient to promote the phosphorylation of AKT and cell proliferation" evidence="1">
    <location>
        <begin position="85"/>
        <end position="378"/>
    </location>
</feature>
<feature type="region of interest" description="Required for nuclear lamina association" evidence="1">
    <location>
        <begin position="136"/>
        <end position="365"/>
    </location>
</feature>
<feature type="region of interest" description="Disordered" evidence="2">
    <location>
        <begin position="181"/>
        <end position="241"/>
    </location>
</feature>
<feature type="region of interest" description="Disordered" evidence="2">
    <location>
        <begin position="290"/>
        <end position="444"/>
    </location>
</feature>
<feature type="region of interest" description="Required for nuclear localization" evidence="1">
    <location>
        <begin position="519"/>
        <end position="536"/>
    </location>
</feature>
<feature type="region of interest" description="Disordered" evidence="2">
    <location>
        <begin position="524"/>
        <end position="587"/>
    </location>
</feature>
<feature type="compositionally biased region" description="Polar residues" evidence="2">
    <location>
        <begin position="1"/>
        <end position="11"/>
    </location>
</feature>
<feature type="compositionally biased region" description="Low complexity" evidence="2">
    <location>
        <begin position="200"/>
        <end position="214"/>
    </location>
</feature>
<feature type="compositionally biased region" description="Pro residues" evidence="2">
    <location>
        <begin position="215"/>
        <end position="234"/>
    </location>
</feature>
<feature type="compositionally biased region" description="Polar residues" evidence="2">
    <location>
        <begin position="314"/>
        <end position="325"/>
    </location>
</feature>
<feature type="compositionally biased region" description="Pro residues" evidence="2">
    <location>
        <begin position="337"/>
        <end position="356"/>
    </location>
</feature>
<feature type="compositionally biased region" description="Low complexity" evidence="2">
    <location>
        <begin position="398"/>
        <end position="410"/>
    </location>
</feature>
<feature type="compositionally biased region" description="Low complexity" evidence="2">
    <location>
        <begin position="538"/>
        <end position="548"/>
    </location>
</feature>
<feature type="compositionally biased region" description="Acidic residues" evidence="2">
    <location>
        <begin position="572"/>
        <end position="581"/>
    </location>
</feature>
<feature type="modified residue" description="N-acetylmethionine" evidence="1">
    <location>
        <position position="1"/>
    </location>
</feature>
<feature type="modified residue" description="Phosphoserine" evidence="1">
    <location>
        <position position="277"/>
    </location>
</feature>
<feature type="sequence conflict" description="In Ref. 1; AAX46642." evidence="3" ref="1">
    <original>A</original>
    <variation>G</variation>
    <location>
        <position position="392"/>
    </location>
</feature>